<accession>P34002</accession>
<comment type="function">
    <text evidence="1">Catalyzes the conversion of 3-deoxy-D-arabino-heptulosonate 7-phosphate (DAHP) to dehydroquinate (DHQ).</text>
</comment>
<comment type="catalytic activity">
    <reaction evidence="1">
        <text>7-phospho-2-dehydro-3-deoxy-D-arabino-heptonate = 3-dehydroquinate + phosphate</text>
        <dbReference type="Rhea" id="RHEA:21968"/>
        <dbReference type="ChEBI" id="CHEBI:32364"/>
        <dbReference type="ChEBI" id="CHEBI:43474"/>
        <dbReference type="ChEBI" id="CHEBI:58394"/>
        <dbReference type="EC" id="4.2.3.4"/>
    </reaction>
</comment>
<comment type="cofactor">
    <cofactor evidence="1">
        <name>NAD(+)</name>
        <dbReference type="ChEBI" id="CHEBI:57540"/>
    </cofactor>
</comment>
<comment type="cofactor">
    <cofactor evidence="1">
        <name>Co(2+)</name>
        <dbReference type="ChEBI" id="CHEBI:48828"/>
    </cofactor>
    <cofactor evidence="1">
        <name>Zn(2+)</name>
        <dbReference type="ChEBI" id="CHEBI:29105"/>
    </cofactor>
    <text evidence="1">Binds 1 divalent metal cation per subunit. Can use either Co(2+) or Zn(2+).</text>
</comment>
<comment type="pathway">
    <text evidence="1">Metabolic intermediate biosynthesis; chorismate biosynthesis; chorismate from D-erythrose 4-phosphate and phosphoenolpyruvate: step 2/7.</text>
</comment>
<comment type="subcellular location">
    <subcellularLocation>
        <location evidence="1">Cytoplasm</location>
    </subcellularLocation>
</comment>
<comment type="similarity">
    <text evidence="1 2">Belongs to the sugar phosphate cyclases superfamily. Dehydroquinate synthase family.</text>
</comment>
<proteinExistence type="inferred from homology"/>
<protein>
    <recommendedName>
        <fullName evidence="1">3-dehydroquinate synthase</fullName>
        <shortName evidence="1">DHQS</shortName>
        <ecNumber evidence="1">4.2.3.4</ecNumber>
    </recommendedName>
</protein>
<gene>
    <name evidence="1" type="primary">aroB</name>
    <name type="ordered locus">PA5038</name>
</gene>
<sequence>MRTLHVDLGERSYPIYIGENLLGDARWFAPHIVGRRVAVISNETVAPLYLETLLKALQGHEVTPVVLPDGEAYKQWETLQLIFDVLLKERHDRKTTLIALGGGVIGDMAGFAAACYQRGVNFIQVPTTLLSQVDSSVGGKTGINHPLGKNMIGAFYQPQAVVIDTASLKTLPSRELSAGLAEVIKYGFICDEPFITWLEAHMDALLALEPTVVTEAIERSCAAKARVVGADERESGVRATLNLGHTFGHAIETQQGYGVWLHGEAVGAGTVMALEMSHRLGWLSAAERDRGIRLLRRAGLPVVPPAEMTAEDFMEHMAVDKKVLDGRLRLVLLQGLGNAVVTGDFPREILDATLRTDYRALADQLGDE</sequence>
<evidence type="ECO:0000255" key="1">
    <source>
        <dbReference type="HAMAP-Rule" id="MF_00110"/>
    </source>
</evidence>
<evidence type="ECO:0000305" key="2"/>
<dbReference type="EC" id="4.2.3.4" evidence="1"/>
<dbReference type="EMBL" id="AE004091">
    <property type="protein sequence ID" value="AAG08423.1"/>
    <property type="molecule type" value="Genomic_DNA"/>
</dbReference>
<dbReference type="EMBL" id="L13866">
    <property type="protein sequence ID" value="AAC36825.1"/>
    <property type="molecule type" value="Unassigned_DNA"/>
</dbReference>
<dbReference type="PIR" id="G83015">
    <property type="entry name" value="G83015"/>
</dbReference>
<dbReference type="RefSeq" id="NP_253725.1">
    <property type="nucleotide sequence ID" value="NC_002516.2"/>
</dbReference>
<dbReference type="RefSeq" id="WP_003114574.1">
    <property type="nucleotide sequence ID" value="NZ_QZGE01000002.1"/>
</dbReference>
<dbReference type="SMR" id="P34002"/>
<dbReference type="FunCoup" id="P34002">
    <property type="interactions" value="658"/>
</dbReference>
<dbReference type="STRING" id="208964.PA5038"/>
<dbReference type="PaxDb" id="208964-PA5038"/>
<dbReference type="GeneID" id="881253"/>
<dbReference type="KEGG" id="pae:PA5038"/>
<dbReference type="PATRIC" id="fig|208964.12.peg.5282"/>
<dbReference type="PseudoCAP" id="PA5038"/>
<dbReference type="HOGENOM" id="CLU_001201_0_2_6"/>
<dbReference type="InParanoid" id="P34002"/>
<dbReference type="OrthoDB" id="9806583at2"/>
<dbReference type="PhylomeDB" id="P34002"/>
<dbReference type="BioCyc" id="PAER208964:G1FZ6-5154-MONOMER"/>
<dbReference type="UniPathway" id="UPA00053">
    <property type="reaction ID" value="UER00085"/>
</dbReference>
<dbReference type="Proteomes" id="UP000002438">
    <property type="component" value="Chromosome"/>
</dbReference>
<dbReference type="GO" id="GO:0005737">
    <property type="term" value="C:cytoplasm"/>
    <property type="evidence" value="ECO:0007669"/>
    <property type="project" value="UniProtKB-SubCell"/>
</dbReference>
<dbReference type="GO" id="GO:0003856">
    <property type="term" value="F:3-dehydroquinate synthase activity"/>
    <property type="evidence" value="ECO:0000318"/>
    <property type="project" value="GO_Central"/>
</dbReference>
<dbReference type="GO" id="GO:0046872">
    <property type="term" value="F:metal ion binding"/>
    <property type="evidence" value="ECO:0007669"/>
    <property type="project" value="UniProtKB-KW"/>
</dbReference>
<dbReference type="GO" id="GO:0000166">
    <property type="term" value="F:nucleotide binding"/>
    <property type="evidence" value="ECO:0007669"/>
    <property type="project" value="UniProtKB-KW"/>
</dbReference>
<dbReference type="GO" id="GO:0008652">
    <property type="term" value="P:amino acid biosynthetic process"/>
    <property type="evidence" value="ECO:0007669"/>
    <property type="project" value="UniProtKB-KW"/>
</dbReference>
<dbReference type="GO" id="GO:0009073">
    <property type="term" value="P:aromatic amino acid family biosynthetic process"/>
    <property type="evidence" value="ECO:0000318"/>
    <property type="project" value="GO_Central"/>
</dbReference>
<dbReference type="GO" id="GO:0009423">
    <property type="term" value="P:chorismate biosynthetic process"/>
    <property type="evidence" value="ECO:0007669"/>
    <property type="project" value="UniProtKB-UniRule"/>
</dbReference>
<dbReference type="CDD" id="cd08195">
    <property type="entry name" value="DHQS"/>
    <property type="match status" value="1"/>
</dbReference>
<dbReference type="FunFam" id="1.20.1090.10:FF:000002">
    <property type="entry name" value="3-dehydroquinate synthase"/>
    <property type="match status" value="1"/>
</dbReference>
<dbReference type="FunFam" id="3.40.50.1970:FF:000001">
    <property type="entry name" value="3-dehydroquinate synthase"/>
    <property type="match status" value="1"/>
</dbReference>
<dbReference type="Gene3D" id="3.40.50.1970">
    <property type="match status" value="1"/>
</dbReference>
<dbReference type="Gene3D" id="1.20.1090.10">
    <property type="entry name" value="Dehydroquinate synthase-like - alpha domain"/>
    <property type="match status" value="1"/>
</dbReference>
<dbReference type="HAMAP" id="MF_00110">
    <property type="entry name" value="DHQ_synthase"/>
    <property type="match status" value="1"/>
</dbReference>
<dbReference type="InterPro" id="IPR050071">
    <property type="entry name" value="Dehydroquinate_synthase"/>
</dbReference>
<dbReference type="InterPro" id="IPR016037">
    <property type="entry name" value="DHQ_synth_AroB"/>
</dbReference>
<dbReference type="InterPro" id="IPR030963">
    <property type="entry name" value="DHQ_synth_fam"/>
</dbReference>
<dbReference type="InterPro" id="IPR030960">
    <property type="entry name" value="DHQS/DOIS_N"/>
</dbReference>
<dbReference type="InterPro" id="IPR056179">
    <property type="entry name" value="DHQS_C"/>
</dbReference>
<dbReference type="NCBIfam" id="TIGR01357">
    <property type="entry name" value="aroB"/>
    <property type="match status" value="1"/>
</dbReference>
<dbReference type="PANTHER" id="PTHR43622">
    <property type="entry name" value="3-DEHYDROQUINATE SYNTHASE"/>
    <property type="match status" value="1"/>
</dbReference>
<dbReference type="PANTHER" id="PTHR43622:SF7">
    <property type="entry name" value="3-DEHYDROQUINATE SYNTHASE, CHLOROPLASTIC"/>
    <property type="match status" value="1"/>
</dbReference>
<dbReference type="Pfam" id="PF01761">
    <property type="entry name" value="DHQ_synthase"/>
    <property type="match status" value="1"/>
</dbReference>
<dbReference type="Pfam" id="PF24621">
    <property type="entry name" value="DHQS_C"/>
    <property type="match status" value="1"/>
</dbReference>
<dbReference type="PIRSF" id="PIRSF001455">
    <property type="entry name" value="DHQ_synth"/>
    <property type="match status" value="1"/>
</dbReference>
<dbReference type="SUPFAM" id="SSF56796">
    <property type="entry name" value="Dehydroquinate synthase-like"/>
    <property type="match status" value="1"/>
</dbReference>
<feature type="chain" id="PRO_0000140768" description="3-dehydroquinate synthase">
    <location>
        <begin position="1"/>
        <end position="368"/>
    </location>
</feature>
<feature type="binding site" evidence="1">
    <location>
        <begin position="69"/>
        <end position="74"/>
    </location>
    <ligand>
        <name>NAD(+)</name>
        <dbReference type="ChEBI" id="CHEBI:57540"/>
    </ligand>
</feature>
<feature type="binding site" evidence="1">
    <location>
        <begin position="103"/>
        <end position="107"/>
    </location>
    <ligand>
        <name>NAD(+)</name>
        <dbReference type="ChEBI" id="CHEBI:57540"/>
    </ligand>
</feature>
<feature type="binding site" evidence="1">
    <location>
        <begin position="127"/>
        <end position="128"/>
    </location>
    <ligand>
        <name>NAD(+)</name>
        <dbReference type="ChEBI" id="CHEBI:57540"/>
    </ligand>
</feature>
<feature type="binding site" evidence="1">
    <location>
        <position position="140"/>
    </location>
    <ligand>
        <name>NAD(+)</name>
        <dbReference type="ChEBI" id="CHEBI:57540"/>
    </ligand>
</feature>
<feature type="binding site" evidence="1">
    <location>
        <position position="149"/>
    </location>
    <ligand>
        <name>NAD(+)</name>
        <dbReference type="ChEBI" id="CHEBI:57540"/>
    </ligand>
</feature>
<feature type="binding site" evidence="1">
    <location>
        <position position="182"/>
    </location>
    <ligand>
        <name>Zn(2+)</name>
        <dbReference type="ChEBI" id="CHEBI:29105"/>
    </ligand>
</feature>
<feature type="binding site" evidence="1">
    <location>
        <position position="245"/>
    </location>
    <ligand>
        <name>Zn(2+)</name>
        <dbReference type="ChEBI" id="CHEBI:29105"/>
    </ligand>
</feature>
<feature type="binding site" evidence="1">
    <location>
        <position position="262"/>
    </location>
    <ligand>
        <name>Zn(2+)</name>
        <dbReference type="ChEBI" id="CHEBI:29105"/>
    </ligand>
</feature>
<name>AROB_PSEAE</name>
<organism>
    <name type="scientific">Pseudomonas aeruginosa (strain ATCC 15692 / DSM 22644 / CIP 104116 / JCM 14847 / LMG 12228 / 1C / PRS 101 / PAO1)</name>
    <dbReference type="NCBI Taxonomy" id="208964"/>
    <lineage>
        <taxon>Bacteria</taxon>
        <taxon>Pseudomonadati</taxon>
        <taxon>Pseudomonadota</taxon>
        <taxon>Gammaproteobacteria</taxon>
        <taxon>Pseudomonadales</taxon>
        <taxon>Pseudomonadaceae</taxon>
        <taxon>Pseudomonas</taxon>
    </lineage>
</organism>
<keyword id="KW-0028">Amino-acid biosynthesis</keyword>
<keyword id="KW-0057">Aromatic amino acid biosynthesis</keyword>
<keyword id="KW-0170">Cobalt</keyword>
<keyword id="KW-0963">Cytoplasm</keyword>
<keyword id="KW-0456">Lyase</keyword>
<keyword id="KW-0479">Metal-binding</keyword>
<keyword id="KW-0520">NAD</keyword>
<keyword id="KW-0547">Nucleotide-binding</keyword>
<keyword id="KW-1185">Reference proteome</keyword>
<keyword id="KW-0862">Zinc</keyword>
<reference key="1">
    <citation type="journal article" date="2000" name="Nature">
        <title>Complete genome sequence of Pseudomonas aeruginosa PAO1, an opportunistic pathogen.</title>
        <authorList>
            <person name="Stover C.K."/>
            <person name="Pham X.-Q.T."/>
            <person name="Erwin A.L."/>
            <person name="Mizoguchi S.D."/>
            <person name="Warrener P."/>
            <person name="Hickey M.J."/>
            <person name="Brinkman F.S.L."/>
            <person name="Hufnagle W.O."/>
            <person name="Kowalik D.J."/>
            <person name="Lagrou M."/>
            <person name="Garber R.L."/>
            <person name="Goltry L."/>
            <person name="Tolentino E."/>
            <person name="Westbrock-Wadman S."/>
            <person name="Yuan Y."/>
            <person name="Brody L.L."/>
            <person name="Coulter S.N."/>
            <person name="Folger K.R."/>
            <person name="Kas A."/>
            <person name="Larbig K."/>
            <person name="Lim R.M."/>
            <person name="Smith K.A."/>
            <person name="Spencer D.H."/>
            <person name="Wong G.K.-S."/>
            <person name="Wu Z."/>
            <person name="Paulsen I.T."/>
            <person name="Reizer J."/>
            <person name="Saier M.H. Jr."/>
            <person name="Hancock R.E.W."/>
            <person name="Lory S."/>
            <person name="Olson M.V."/>
        </authorList>
    </citation>
    <scope>NUCLEOTIDE SEQUENCE [LARGE SCALE GENOMIC DNA]</scope>
    <source>
        <strain>ATCC 15692 / DSM 22644 / CIP 104116 / JCM 14847 / LMG 12228 / 1C / PRS 101 / PAO1</strain>
    </source>
</reference>
<reference key="2">
    <citation type="journal article" date="1993" name="Mol. Microbiol.">
        <title>Characterization of pilQ, a new gene required for the biogenesis of type 4 fimbriae in Pseudomonas aeruginosa.</title>
        <authorList>
            <person name="Martin P.R."/>
            <person name="Hobbs M."/>
            <person name="Free P.D."/>
            <person name="Jeske Y."/>
            <person name="Mattick J.S."/>
        </authorList>
    </citation>
    <scope>NUCLEOTIDE SEQUENCE [GENOMIC DNA] OF 118-221</scope>
    <source>
        <strain>ATCC 25102 / PAK</strain>
    </source>
</reference>